<organism>
    <name type="scientific">Pseudomonas putida (strain W619)</name>
    <dbReference type="NCBI Taxonomy" id="390235"/>
    <lineage>
        <taxon>Bacteria</taxon>
        <taxon>Pseudomonadati</taxon>
        <taxon>Pseudomonadota</taxon>
        <taxon>Gammaproteobacteria</taxon>
        <taxon>Pseudomonadales</taxon>
        <taxon>Pseudomonadaceae</taxon>
        <taxon>Pseudomonas</taxon>
    </lineage>
</organism>
<accession>B1J1B4</accession>
<comment type="similarity">
    <text evidence="1">Belongs to the UPF0225 family.</text>
</comment>
<proteinExistence type="inferred from homology"/>
<gene>
    <name type="ordered locus">PputW619_1140</name>
</gene>
<reference key="1">
    <citation type="submission" date="2008-02" db="EMBL/GenBank/DDBJ databases">
        <title>Complete sequence of Pseudomonas putida W619.</title>
        <authorList>
            <person name="Copeland A."/>
            <person name="Lucas S."/>
            <person name="Lapidus A."/>
            <person name="Barry K."/>
            <person name="Detter J.C."/>
            <person name="Glavina del Rio T."/>
            <person name="Dalin E."/>
            <person name="Tice H."/>
            <person name="Pitluck S."/>
            <person name="Chain P."/>
            <person name="Malfatti S."/>
            <person name="Shin M."/>
            <person name="Vergez L."/>
            <person name="Schmutz J."/>
            <person name="Larimer F."/>
            <person name="Land M."/>
            <person name="Hauser L."/>
            <person name="Kyrpides N."/>
            <person name="Kim E."/>
            <person name="Taghavi S."/>
            <person name="Vangronsveld D."/>
            <person name="van der Lelie D."/>
            <person name="Richardson P."/>
        </authorList>
    </citation>
    <scope>NUCLEOTIDE SEQUENCE [LARGE SCALE GENOMIC DNA]</scope>
    <source>
        <strain>W619</strain>
    </source>
</reference>
<protein>
    <recommendedName>
        <fullName evidence="1">UPF0225 protein PputW619_1140</fullName>
    </recommendedName>
</protein>
<evidence type="ECO:0000255" key="1">
    <source>
        <dbReference type="HAMAP-Rule" id="MF_00612"/>
    </source>
</evidence>
<feature type="chain" id="PRO_1000130391" description="UPF0225 protein PputW619_1140">
    <location>
        <begin position="1"/>
        <end position="160"/>
    </location>
</feature>
<sequence>MSVSVCPCGSGNLLDACCGHYHAGTPAPDAQALMRSRYSAYVLGLIDYLVATTLPAQQAGLDRNAIAAWSAQSTWLGLEVENAEVLGGQPEHAFVTFTARWHDLEGDHQHRERSAFVQHDGRWYFIDPTVELKAGRNDPCPCNSGQKFKKCCASYWGNRA</sequence>
<dbReference type="EMBL" id="CP000949">
    <property type="protein sequence ID" value="ACA71645.1"/>
    <property type="molecule type" value="Genomic_DNA"/>
</dbReference>
<dbReference type="SMR" id="B1J1B4"/>
<dbReference type="STRING" id="390235.PputW619_1140"/>
<dbReference type="KEGG" id="ppw:PputW619_1140"/>
<dbReference type="eggNOG" id="COG3012">
    <property type="taxonomic scope" value="Bacteria"/>
</dbReference>
<dbReference type="HOGENOM" id="CLU_099590_0_1_6"/>
<dbReference type="OrthoDB" id="21421at2"/>
<dbReference type="Gene3D" id="3.10.450.50">
    <property type="match status" value="1"/>
</dbReference>
<dbReference type="HAMAP" id="MF_00612">
    <property type="entry name" value="UPF0225"/>
    <property type="match status" value="1"/>
</dbReference>
<dbReference type="InterPro" id="IPR032710">
    <property type="entry name" value="NTF2-like_dom_sf"/>
</dbReference>
<dbReference type="InterPro" id="IPR004027">
    <property type="entry name" value="SEC_C_motif"/>
</dbReference>
<dbReference type="InterPro" id="IPR023006">
    <property type="entry name" value="UPF0225"/>
</dbReference>
<dbReference type="InterPro" id="IPR048469">
    <property type="entry name" value="YchJ-like_M"/>
</dbReference>
<dbReference type="NCBIfam" id="NF001213">
    <property type="entry name" value="PRK00183.1"/>
    <property type="match status" value="1"/>
</dbReference>
<dbReference type="NCBIfam" id="NF002449">
    <property type="entry name" value="PRK01617.1"/>
    <property type="match status" value="1"/>
</dbReference>
<dbReference type="NCBIfam" id="NF002486">
    <property type="entry name" value="PRK01752.1"/>
    <property type="match status" value="1"/>
</dbReference>
<dbReference type="PANTHER" id="PTHR33747:SF1">
    <property type="entry name" value="ADENYLATE CYCLASE-ASSOCIATED CAP C-TERMINAL DOMAIN-CONTAINING PROTEIN"/>
    <property type="match status" value="1"/>
</dbReference>
<dbReference type="PANTHER" id="PTHR33747">
    <property type="entry name" value="UPF0225 PROTEIN SCO1677"/>
    <property type="match status" value="1"/>
</dbReference>
<dbReference type="Pfam" id="PF02810">
    <property type="entry name" value="SEC-C"/>
    <property type="match status" value="1"/>
</dbReference>
<dbReference type="Pfam" id="PF17775">
    <property type="entry name" value="YchJ_M-like"/>
    <property type="match status" value="1"/>
</dbReference>
<dbReference type="SUPFAM" id="SSF54427">
    <property type="entry name" value="NTF2-like"/>
    <property type="match status" value="1"/>
</dbReference>
<dbReference type="SUPFAM" id="SSF103642">
    <property type="entry name" value="Sec-C motif"/>
    <property type="match status" value="1"/>
</dbReference>
<name>Y1140_PSEPW</name>